<keyword id="KW-0227">DNA damage</keyword>
<keyword id="KW-0233">DNA recombination</keyword>
<keyword id="KW-0234">DNA repair</keyword>
<keyword id="KW-0238">DNA-binding</keyword>
<keyword id="KW-1185">Reference proteome</keyword>
<evidence type="ECO:0000255" key="1">
    <source>
        <dbReference type="HAMAP-Rule" id="MF_01875"/>
    </source>
</evidence>
<dbReference type="EMBL" id="CP000698">
    <property type="protein sequence ID" value="ABQ27611.1"/>
    <property type="molecule type" value="Genomic_DNA"/>
</dbReference>
<dbReference type="RefSeq" id="WP_011940272.1">
    <property type="nucleotide sequence ID" value="NC_009483.1"/>
</dbReference>
<dbReference type="SMR" id="A5G743"/>
<dbReference type="STRING" id="351605.Gura_3455"/>
<dbReference type="KEGG" id="gur:Gura_3455"/>
<dbReference type="HOGENOM" id="CLU_048975_0_1_7"/>
<dbReference type="OrthoDB" id="9795084at2"/>
<dbReference type="Proteomes" id="UP000006695">
    <property type="component" value="Chromosome"/>
</dbReference>
<dbReference type="GO" id="GO:0003690">
    <property type="term" value="F:double-stranded DNA binding"/>
    <property type="evidence" value="ECO:0007669"/>
    <property type="project" value="UniProtKB-UniRule"/>
</dbReference>
<dbReference type="GO" id="GO:0006310">
    <property type="term" value="P:DNA recombination"/>
    <property type="evidence" value="ECO:0007669"/>
    <property type="project" value="UniProtKB-KW"/>
</dbReference>
<dbReference type="GO" id="GO:0006303">
    <property type="term" value="P:double-strand break repair via nonhomologous end joining"/>
    <property type="evidence" value="ECO:0007669"/>
    <property type="project" value="UniProtKB-UniRule"/>
</dbReference>
<dbReference type="CDD" id="cd00789">
    <property type="entry name" value="KU_like"/>
    <property type="match status" value="1"/>
</dbReference>
<dbReference type="Gene3D" id="2.40.290.10">
    <property type="match status" value="1"/>
</dbReference>
<dbReference type="HAMAP" id="MF_01875">
    <property type="entry name" value="Prokaryotic_Ku"/>
    <property type="match status" value="1"/>
</dbReference>
<dbReference type="InterPro" id="IPR006164">
    <property type="entry name" value="Ku70/Ku80_beta-barrel_dom"/>
</dbReference>
<dbReference type="InterPro" id="IPR009187">
    <property type="entry name" value="Prok_Ku"/>
</dbReference>
<dbReference type="InterPro" id="IPR016194">
    <property type="entry name" value="SPOC-like_C_dom_sf"/>
</dbReference>
<dbReference type="NCBIfam" id="TIGR02772">
    <property type="entry name" value="Ku_bact"/>
    <property type="match status" value="1"/>
</dbReference>
<dbReference type="PANTHER" id="PTHR41251">
    <property type="entry name" value="NON-HOMOLOGOUS END JOINING PROTEIN KU"/>
    <property type="match status" value="1"/>
</dbReference>
<dbReference type="PANTHER" id="PTHR41251:SF1">
    <property type="entry name" value="NON-HOMOLOGOUS END JOINING PROTEIN KU"/>
    <property type="match status" value="1"/>
</dbReference>
<dbReference type="Pfam" id="PF02735">
    <property type="entry name" value="Ku"/>
    <property type="match status" value="1"/>
</dbReference>
<dbReference type="PIRSF" id="PIRSF006493">
    <property type="entry name" value="Prok_Ku"/>
    <property type="match status" value="1"/>
</dbReference>
<dbReference type="SMART" id="SM00559">
    <property type="entry name" value="Ku78"/>
    <property type="match status" value="1"/>
</dbReference>
<dbReference type="SUPFAM" id="SSF100939">
    <property type="entry name" value="SPOC domain-like"/>
    <property type="match status" value="1"/>
</dbReference>
<accession>A5G743</accession>
<feature type="chain" id="PRO_0000389186" description="Non-homologous end joining protein Ku 2">
    <location>
        <begin position="1"/>
        <end position="256"/>
    </location>
</feature>
<feature type="domain" description="Ku" evidence="1">
    <location>
        <begin position="13"/>
        <end position="184"/>
    </location>
</feature>
<name>KU2_GEOUR</name>
<comment type="function">
    <text evidence="1">With LigD forms a non-homologous end joining (NHEJ) DNA repair enzyme, which repairs dsDNA breaks with reduced fidelity. Binds linear dsDNA with 5'- and 3'- overhangs but not closed circular dsDNA nor ssDNA. Recruits and stimulates the ligase activity of LigD.</text>
</comment>
<comment type="subunit">
    <text evidence="1">Homodimer. Interacts with LigD.</text>
</comment>
<comment type="similarity">
    <text evidence="1">Belongs to the prokaryotic Ku family.</text>
</comment>
<organism>
    <name type="scientific">Geotalea uraniireducens (strain Rf4)</name>
    <name type="common">Geobacter uraniireducens</name>
    <dbReference type="NCBI Taxonomy" id="351605"/>
    <lineage>
        <taxon>Bacteria</taxon>
        <taxon>Pseudomonadati</taxon>
        <taxon>Thermodesulfobacteriota</taxon>
        <taxon>Desulfuromonadia</taxon>
        <taxon>Geobacterales</taxon>
        <taxon>Geobacteraceae</taxon>
        <taxon>Geotalea</taxon>
    </lineage>
</organism>
<proteinExistence type="inferred from homology"/>
<gene>
    <name evidence="1" type="primary">ku2</name>
    <name type="ordered locus">Gura_3455</name>
</gene>
<sequence length="256" mass="29117">MAGGTIWKGYIHFADTDVAVKLHAAVKAERIQFHLLHKRDHVKLHQQMICAYEKIPVPTEAQTKGFEVEEGKYIIVDPDELEQTAPESSRMIEVHEFVKTGQIDPIFLDRVYYLEPDLHSEGYSELVGALQEMGAEGICTWTMRNRSYLGALQASGKILRLNTLRYADEVISVKSLELQESPVSEKELKIGSDLINQLTTPFQPQKFENEHEKKLQKLIEKKARGEKIALLRPRLLKPTASDKLLQALEESLKKVA</sequence>
<reference key="1">
    <citation type="submission" date="2007-05" db="EMBL/GenBank/DDBJ databases">
        <title>Complete sequence of Geobacter uraniireducens Rf4.</title>
        <authorList>
            <consortium name="US DOE Joint Genome Institute"/>
            <person name="Copeland A."/>
            <person name="Lucas S."/>
            <person name="Lapidus A."/>
            <person name="Barry K."/>
            <person name="Detter J.C."/>
            <person name="Glavina del Rio T."/>
            <person name="Hammon N."/>
            <person name="Israni S."/>
            <person name="Dalin E."/>
            <person name="Tice H."/>
            <person name="Pitluck S."/>
            <person name="Chertkov O."/>
            <person name="Brettin T."/>
            <person name="Bruce D."/>
            <person name="Han C."/>
            <person name="Schmutz J."/>
            <person name="Larimer F."/>
            <person name="Land M."/>
            <person name="Hauser L."/>
            <person name="Kyrpides N."/>
            <person name="Mikhailova N."/>
            <person name="Shelobolina E."/>
            <person name="Aklujkar M."/>
            <person name="Lovley D."/>
            <person name="Richardson P."/>
        </authorList>
    </citation>
    <scope>NUCLEOTIDE SEQUENCE [LARGE SCALE GENOMIC DNA]</scope>
    <source>
        <strain>ATCC BAA-1134 / JCM 13001 / Rf4</strain>
    </source>
</reference>
<protein>
    <recommendedName>
        <fullName evidence="1">Non-homologous end joining protein Ku 2</fullName>
    </recommendedName>
</protein>